<name>PSA_CAEEL</name>
<accession>Q4TT88</accession>
<accession>Q20627</accession>
<protein>
    <recommendedName>
        <fullName evidence="10">Puromycin-sensitive aminopeptidase</fullName>
        <shortName evidence="11">PSA</shortName>
        <ecNumber evidence="12">3.4.11.14</ecNumber>
    </recommendedName>
    <alternativeName>
        <fullName evidence="11">Cytosol alanyl aminopeptidase</fullName>
        <shortName evidence="11">AAP-S</shortName>
    </alternativeName>
</protein>
<organism evidence="13">
    <name type="scientific">Caenorhabditis elegans</name>
    <dbReference type="NCBI Taxonomy" id="6239"/>
    <lineage>
        <taxon>Eukaryota</taxon>
        <taxon>Metazoa</taxon>
        <taxon>Ecdysozoa</taxon>
        <taxon>Nematoda</taxon>
        <taxon>Chromadorea</taxon>
        <taxon>Rhabditida</taxon>
        <taxon>Rhabditina</taxon>
        <taxon>Rhabditomorpha</taxon>
        <taxon>Rhabditoidea</taxon>
        <taxon>Rhabditidae</taxon>
        <taxon>Peloderinae</taxon>
        <taxon>Caenorhabditis</taxon>
    </lineage>
</organism>
<reference evidence="13" key="1">
    <citation type="journal article" date="1998" name="Science">
        <title>Genome sequence of the nematode C. elegans: a platform for investigating biology.</title>
        <authorList>
            <consortium name="The C. elegans sequencing consortium"/>
        </authorList>
    </citation>
    <scope>NUCLEOTIDE SEQUENCE [LARGE SCALE GENOMIC DNA]</scope>
    <source>
        <strain evidence="13">Bristol N2</strain>
    </source>
</reference>
<reference evidence="11" key="2">
    <citation type="journal article" date="2003" name="J. Biol. Chem.">
        <title>The Caenorhabditis elegans orthologue of mammalian puromycin-sensitive aminopeptidase has roles in embryogenesis and reproduction.</title>
        <authorList>
            <person name="Brooks D.R."/>
            <person name="Hooper N.M."/>
            <person name="Isaac R.E."/>
        </authorList>
    </citation>
    <scope>FUNCTION</scope>
    <scope>CATALYTIC ACTIVITY</scope>
    <scope>COFACTOR</scope>
    <scope>ACTIVITY REGULATION</scope>
    <scope>BIOPHYSICOCHEMICAL PROPERTIES</scope>
    <scope>TISSUE SPECIFICITY</scope>
    <scope>DEVELOPMENTAL STAGE</scope>
    <scope>DISRUPTION PHENOTYPE</scope>
</reference>
<reference evidence="11" key="3">
    <citation type="journal article" date="2006" name="Development">
        <title>The puromycin-sensitive aminopeptidase PAM-1 is required for meiotic exit and anteroposterior polarity in the one-cell Caenorhabditis elegans embryo.</title>
        <authorList>
            <person name="Lyczak R."/>
            <person name="Zweier L."/>
            <person name="Group T."/>
            <person name="Murrow M.A."/>
            <person name="Snyder C."/>
            <person name="Kulovitz L."/>
            <person name="Beatty A."/>
            <person name="Smith K."/>
            <person name="Bowerman B."/>
        </authorList>
    </citation>
    <scope>FUNCTION</scope>
    <scope>DISRUPTION PHENOTYPE</scope>
</reference>
<reference evidence="11" key="4">
    <citation type="journal article" date="2010" name="Dev. Biol.">
        <title>The PAM-1 aminopeptidase regulates centrosome positioning to ensure anterior-posterior axis specification in one-cell C. elegans embryos.</title>
        <authorList>
            <person name="Fortin S.M."/>
            <person name="Marshall S.L."/>
            <person name="Jaeger E.C."/>
            <person name="Greene P.E."/>
            <person name="Brady L.K."/>
            <person name="Isaac R.E."/>
            <person name="Schrandt J.C."/>
            <person name="Brooks D.R."/>
            <person name="Lyczak R."/>
        </authorList>
    </citation>
    <scope>FUNCTION</scope>
    <scope>SUBCELLULAR LOCATION</scope>
    <scope>TISSUE SPECIFICITY</scope>
    <scope>DEVELOPMENTAL STAGE</scope>
    <scope>DISRUPTION PHENOTYPE</scope>
</reference>
<reference evidence="11" key="5">
    <citation type="journal article" date="2014" name="Dev. Genes Evol.">
        <title>Collaboration within the M1 aminopeptidase family promotes reproductive success in Caenorhabditis elegans.</title>
        <authorList>
            <person name="Althoff M.J."/>
            <person name="Flick K."/>
            <person name="Trzepacz C."/>
        </authorList>
    </citation>
    <scope>FUNCTION</scope>
    <scope>DISRUPTION PHENOTYPE</scope>
</reference>
<reference evidence="11" key="6">
    <citation type="journal article" date="2017" name="Dev. Biol.">
        <title>Sustained centrosome-cortical contact ensures robust polarization of the one-cell C. elegans embryo.</title>
        <authorList>
            <person name="Saturno D.M."/>
            <person name="Castanzo D.T."/>
            <person name="Williams M."/>
            <person name="Parikh D.A."/>
            <person name="Jaeger E.C."/>
            <person name="Lyczak R."/>
        </authorList>
    </citation>
    <scope>FUNCTION</scope>
    <scope>DISRUPTION PHENOTYPE</scope>
</reference>
<feature type="chain" id="PRO_0000440862" description="Puromycin-sensitive aminopeptidase">
    <location>
        <begin position="1"/>
        <end position="948"/>
    </location>
</feature>
<feature type="active site" description="Proton acceptor" evidence="3">
    <location>
        <position position="378"/>
    </location>
</feature>
<feature type="binding site" evidence="2">
    <location>
        <position position="206"/>
    </location>
    <ligand>
        <name>substrate</name>
    </ligand>
</feature>
<feature type="binding site" evidence="1">
    <location>
        <begin position="341"/>
        <end position="345"/>
    </location>
    <ligand>
        <name>substrate</name>
    </ligand>
</feature>
<feature type="binding site" evidence="3">
    <location>
        <position position="377"/>
    </location>
    <ligand>
        <name>Zn(2+)</name>
        <dbReference type="ChEBI" id="CHEBI:29105"/>
        <note>catalytic</note>
    </ligand>
</feature>
<feature type="binding site" evidence="3">
    <location>
        <position position="381"/>
    </location>
    <ligand>
        <name>Zn(2+)</name>
        <dbReference type="ChEBI" id="CHEBI:29105"/>
        <note>catalytic</note>
    </ligand>
</feature>
<feature type="binding site" evidence="1">
    <location>
        <position position="400"/>
    </location>
    <ligand>
        <name>Zn(2+)</name>
        <dbReference type="ChEBI" id="CHEBI:29105"/>
        <note>catalytic</note>
    </ligand>
</feature>
<feature type="site" description="Transition state stabilizer" evidence="1">
    <location>
        <position position="463"/>
    </location>
</feature>
<feature type="splice variant" id="VSP_059000" description="In isoform a." evidence="11">
    <location>
        <begin position="1"/>
        <end position="64"/>
    </location>
</feature>
<dbReference type="EC" id="3.4.11.14" evidence="12"/>
<dbReference type="EMBL" id="BX284604">
    <property type="protein sequence ID" value="CCD70444.1"/>
    <property type="molecule type" value="Genomic_DNA"/>
</dbReference>
<dbReference type="EMBL" id="BX284604">
    <property type="protein sequence ID" value="CCD70445.1"/>
    <property type="molecule type" value="Genomic_DNA"/>
</dbReference>
<dbReference type="PIR" id="T29637">
    <property type="entry name" value="T29637"/>
</dbReference>
<dbReference type="RefSeq" id="NP_001023209.1">
    <property type="nucleotide sequence ID" value="NM_001028038.4"/>
</dbReference>
<dbReference type="RefSeq" id="NP_001023210.1">
    <molecule id="Q4TT88-1"/>
    <property type="nucleotide sequence ID" value="NM_001028039.3"/>
</dbReference>
<dbReference type="RefSeq" id="NP_001379916.1">
    <molecule id="Q4TT88-2"/>
    <property type="nucleotide sequence ID" value="NM_001392330.1"/>
</dbReference>
<dbReference type="SMR" id="Q4TT88"/>
<dbReference type="FunCoup" id="Q4TT88">
    <property type="interactions" value="2445"/>
</dbReference>
<dbReference type="IntAct" id="Q4TT88">
    <property type="interactions" value="1"/>
</dbReference>
<dbReference type="STRING" id="6239.F49E8.3b.1"/>
<dbReference type="MEROPS" id="M01.A28"/>
<dbReference type="PaxDb" id="6239-F49E8.3b"/>
<dbReference type="PeptideAtlas" id="Q4TT88"/>
<dbReference type="EnsemblMetazoa" id="F49E8.3a.1">
    <molecule id="Q4TT88-2"/>
    <property type="protein sequence ID" value="F49E8.3a.1"/>
    <property type="gene ID" value="WBGene00003914"/>
</dbReference>
<dbReference type="EnsemblMetazoa" id="F49E8.3a.2">
    <molecule id="Q4TT88-2"/>
    <property type="protein sequence ID" value="F49E8.3a.2"/>
    <property type="gene ID" value="WBGene00003914"/>
</dbReference>
<dbReference type="EnsemblMetazoa" id="F49E8.3a.3">
    <molecule id="Q4TT88-2"/>
    <property type="protein sequence ID" value="F49E8.3a.3"/>
    <property type="gene ID" value="WBGene00003914"/>
</dbReference>
<dbReference type="EnsemblMetazoa" id="F49E8.3b.1">
    <molecule id="Q4TT88-1"/>
    <property type="protein sequence ID" value="F49E8.3b.1"/>
    <property type="gene ID" value="WBGene00003914"/>
</dbReference>
<dbReference type="GeneID" id="177528"/>
<dbReference type="KEGG" id="cel:CELE_F49E8.3"/>
<dbReference type="UCSC" id="F49E8.3a.1">
    <property type="organism name" value="c. elegans"/>
</dbReference>
<dbReference type="AGR" id="WB:WBGene00003914"/>
<dbReference type="CTD" id="177528"/>
<dbReference type="WormBase" id="F49E8.3a">
    <molecule id="Q4TT88-2"/>
    <property type="protein sequence ID" value="CE10790"/>
    <property type="gene ID" value="WBGene00003914"/>
    <property type="gene designation" value="pam-1"/>
</dbReference>
<dbReference type="WormBase" id="F49E8.3b">
    <molecule id="Q4TT88-1"/>
    <property type="protein sequence ID" value="CE37649"/>
    <property type="gene ID" value="WBGene00003914"/>
    <property type="gene designation" value="pam-1"/>
</dbReference>
<dbReference type="eggNOG" id="KOG1046">
    <property type="taxonomic scope" value="Eukaryota"/>
</dbReference>
<dbReference type="GeneTree" id="ENSGT00940000155246"/>
<dbReference type="InParanoid" id="Q4TT88"/>
<dbReference type="OMA" id="MMEYVAI"/>
<dbReference type="OrthoDB" id="275509at2759"/>
<dbReference type="PhylomeDB" id="Q4TT88"/>
<dbReference type="Reactome" id="R-CEL-2022377">
    <property type="pathway name" value="Metabolism of Angiotensinogen to Angiotensins"/>
</dbReference>
<dbReference type="Reactome" id="R-CEL-983168">
    <property type="pathway name" value="Antigen processing: Ubiquitination &amp; Proteasome degradation"/>
</dbReference>
<dbReference type="Reactome" id="R-CEL-983170">
    <property type="pathway name" value="Antigen Presentation: Folding, assembly and peptide loading of class I MHC"/>
</dbReference>
<dbReference type="PRO" id="PR:Q4TT88"/>
<dbReference type="Proteomes" id="UP000001940">
    <property type="component" value="Chromosome IV"/>
</dbReference>
<dbReference type="Bgee" id="WBGene00003914">
    <property type="expression patterns" value="Expressed in adult organism and 4 other cell types or tissues"/>
</dbReference>
<dbReference type="GO" id="GO:0005938">
    <property type="term" value="C:cell cortex"/>
    <property type="evidence" value="ECO:0007669"/>
    <property type="project" value="UniProtKB-SubCell"/>
</dbReference>
<dbReference type="GO" id="GO:0000793">
    <property type="term" value="C:condensed chromosome"/>
    <property type="evidence" value="ECO:0000314"/>
    <property type="project" value="UniProtKB"/>
</dbReference>
<dbReference type="GO" id="GO:0005737">
    <property type="term" value="C:cytoplasm"/>
    <property type="evidence" value="ECO:0000314"/>
    <property type="project" value="WormBase"/>
</dbReference>
<dbReference type="GO" id="GO:0005615">
    <property type="term" value="C:extracellular space"/>
    <property type="evidence" value="ECO:0000318"/>
    <property type="project" value="GO_Central"/>
</dbReference>
<dbReference type="GO" id="GO:0016020">
    <property type="term" value="C:membrane"/>
    <property type="evidence" value="ECO:0000318"/>
    <property type="project" value="GO_Central"/>
</dbReference>
<dbReference type="GO" id="GO:0097431">
    <property type="term" value="C:mitotic spindle pole"/>
    <property type="evidence" value="ECO:0000314"/>
    <property type="project" value="UniProtKB"/>
</dbReference>
<dbReference type="GO" id="GO:0016285">
    <property type="term" value="F:alanyl aminopeptidase activity"/>
    <property type="evidence" value="ECO:0007669"/>
    <property type="project" value="UniProtKB-EC"/>
</dbReference>
<dbReference type="GO" id="GO:0070006">
    <property type="term" value="F:metalloaminopeptidase activity"/>
    <property type="evidence" value="ECO:0000314"/>
    <property type="project" value="WormBase"/>
</dbReference>
<dbReference type="GO" id="GO:0042277">
    <property type="term" value="F:peptide binding"/>
    <property type="evidence" value="ECO:0000318"/>
    <property type="project" value="GO_Central"/>
</dbReference>
<dbReference type="GO" id="GO:0008270">
    <property type="term" value="F:zinc ion binding"/>
    <property type="evidence" value="ECO:0000318"/>
    <property type="project" value="GO_Central"/>
</dbReference>
<dbReference type="GO" id="GO:0008595">
    <property type="term" value="P:anterior/posterior axis specification, embryo"/>
    <property type="evidence" value="ECO:0000315"/>
    <property type="project" value="UniProtKB"/>
</dbReference>
<dbReference type="GO" id="GO:0009792">
    <property type="term" value="P:embryo development ending in birth or egg hatching"/>
    <property type="evidence" value="ECO:0000315"/>
    <property type="project" value="UniProtKB"/>
</dbReference>
<dbReference type="GO" id="GO:1990947">
    <property type="term" value="P:exit from meiosis"/>
    <property type="evidence" value="ECO:0000315"/>
    <property type="project" value="UniProtKB"/>
</dbReference>
<dbReference type="GO" id="GO:0030590">
    <property type="term" value="P:first cell cycle pseudocleavage"/>
    <property type="evidence" value="ECO:0000315"/>
    <property type="project" value="UniProtKB"/>
</dbReference>
<dbReference type="GO" id="GO:0051661">
    <property type="term" value="P:maintenance of centrosome location"/>
    <property type="evidence" value="ECO:0000315"/>
    <property type="project" value="UniProtKB"/>
</dbReference>
<dbReference type="GO" id="GO:0048477">
    <property type="term" value="P:oogenesis"/>
    <property type="evidence" value="ECO:0007669"/>
    <property type="project" value="UniProtKB-KW"/>
</dbReference>
<dbReference type="GO" id="GO:0043171">
    <property type="term" value="P:peptide catabolic process"/>
    <property type="evidence" value="ECO:0000314"/>
    <property type="project" value="WormBase"/>
</dbReference>
<dbReference type="GO" id="GO:1900195">
    <property type="term" value="P:positive regulation of oocyte maturation"/>
    <property type="evidence" value="ECO:0000315"/>
    <property type="project" value="UniProtKB"/>
</dbReference>
<dbReference type="GO" id="GO:0006508">
    <property type="term" value="P:proteolysis"/>
    <property type="evidence" value="ECO:0000318"/>
    <property type="project" value="GO_Central"/>
</dbReference>
<dbReference type="GO" id="GO:0046662">
    <property type="term" value="P:regulation of egg-laying behavior"/>
    <property type="evidence" value="ECO:0000315"/>
    <property type="project" value="UniProtKB"/>
</dbReference>
<dbReference type="GO" id="GO:1903538">
    <property type="term" value="P:regulation of meiotic cell cycle process involved in oocyte maturation"/>
    <property type="evidence" value="ECO:0000315"/>
    <property type="project" value="UniProtKB"/>
</dbReference>
<dbReference type="CDD" id="cd09601">
    <property type="entry name" value="M1_APN-Q_like"/>
    <property type="match status" value="1"/>
</dbReference>
<dbReference type="FunFam" id="2.60.40.1730:FF:000013">
    <property type="entry name" value="Aminopeptidase"/>
    <property type="match status" value="1"/>
</dbReference>
<dbReference type="FunFam" id="2.60.40.1910:FF:000002">
    <property type="entry name" value="Aminopeptidase"/>
    <property type="match status" value="1"/>
</dbReference>
<dbReference type="FunFam" id="1.10.390.10:FF:000006">
    <property type="entry name" value="Puromycin-sensitive aminopeptidase"/>
    <property type="match status" value="1"/>
</dbReference>
<dbReference type="Gene3D" id="1.25.50.20">
    <property type="match status" value="1"/>
</dbReference>
<dbReference type="Gene3D" id="2.60.40.1910">
    <property type="match status" value="1"/>
</dbReference>
<dbReference type="Gene3D" id="1.10.390.10">
    <property type="entry name" value="Neutral Protease Domain 2"/>
    <property type="match status" value="1"/>
</dbReference>
<dbReference type="Gene3D" id="2.60.40.1730">
    <property type="entry name" value="tricorn interacting facor f3 domain"/>
    <property type="match status" value="1"/>
</dbReference>
<dbReference type="InterPro" id="IPR045357">
    <property type="entry name" value="Aminopeptidase_N-like_N"/>
</dbReference>
<dbReference type="InterPro" id="IPR042097">
    <property type="entry name" value="Aminopeptidase_N-like_N_sf"/>
</dbReference>
<dbReference type="InterPro" id="IPR024571">
    <property type="entry name" value="ERAP1-like_C_dom"/>
</dbReference>
<dbReference type="InterPro" id="IPR034016">
    <property type="entry name" value="M1_APN-typ"/>
</dbReference>
<dbReference type="InterPro" id="IPR001930">
    <property type="entry name" value="Peptidase_M1"/>
</dbReference>
<dbReference type="InterPro" id="IPR050344">
    <property type="entry name" value="Peptidase_M1_aminopeptidases"/>
</dbReference>
<dbReference type="InterPro" id="IPR014782">
    <property type="entry name" value="Peptidase_M1_dom"/>
</dbReference>
<dbReference type="InterPro" id="IPR027268">
    <property type="entry name" value="Peptidase_M4/M1_CTD_sf"/>
</dbReference>
<dbReference type="PANTHER" id="PTHR11533">
    <property type="entry name" value="PROTEASE M1 ZINC METALLOPROTEASE"/>
    <property type="match status" value="1"/>
</dbReference>
<dbReference type="PANTHER" id="PTHR11533:SF174">
    <property type="entry name" value="PUROMYCIN-SENSITIVE AMINOPEPTIDASE-RELATED"/>
    <property type="match status" value="1"/>
</dbReference>
<dbReference type="Pfam" id="PF11838">
    <property type="entry name" value="ERAP1_C"/>
    <property type="match status" value="1"/>
</dbReference>
<dbReference type="Pfam" id="PF01433">
    <property type="entry name" value="Peptidase_M1"/>
    <property type="match status" value="1"/>
</dbReference>
<dbReference type="Pfam" id="PF17900">
    <property type="entry name" value="Peptidase_M1_N"/>
    <property type="match status" value="1"/>
</dbReference>
<dbReference type="PRINTS" id="PR00756">
    <property type="entry name" value="ALADIPTASE"/>
</dbReference>
<dbReference type="SUPFAM" id="SSF63737">
    <property type="entry name" value="Leukotriene A4 hydrolase N-terminal domain"/>
    <property type="match status" value="1"/>
</dbReference>
<dbReference type="SUPFAM" id="SSF55486">
    <property type="entry name" value="Metalloproteases ('zincins'), catalytic domain"/>
    <property type="match status" value="1"/>
</dbReference>
<dbReference type="PROSITE" id="PS00142">
    <property type="entry name" value="ZINC_PROTEASE"/>
    <property type="match status" value="1"/>
</dbReference>
<keyword id="KW-0025">Alternative splicing</keyword>
<keyword id="KW-0031">Aminopeptidase</keyword>
<keyword id="KW-0158">Chromosome</keyword>
<keyword id="KW-0963">Cytoplasm</keyword>
<keyword id="KW-0206">Cytoskeleton</keyword>
<keyword id="KW-0221">Differentiation</keyword>
<keyword id="KW-0378">Hydrolase</keyword>
<keyword id="KW-0469">Meiosis</keyword>
<keyword id="KW-0479">Metal-binding</keyword>
<keyword id="KW-0482">Metalloprotease</keyword>
<keyword id="KW-0896">Oogenesis</keyword>
<keyword id="KW-0645">Protease</keyword>
<keyword id="KW-1185">Reference proteome</keyword>
<keyword id="KW-0862">Zinc</keyword>
<sequence length="948" mass="107150">MLGRLAVRQAVRCSKASIKPVNTHQLCLRNFSAIRRLSFVAGAQCRPYHTTANMLHRTARGEHGMAACGNPSAAVKFERLPTFAEPTHYNVRLSPCLNQFSFDGHATIDVTIKEATDVLKVHAQSLLIQSVSLITQPGDASKSLETSYDDKLNILTIKLPTTMQPQKVQLDFKFVGELNDKMRGFYRSQYKDKNGTEKFLASTQFESTYARYAFPCFDEPIYKATFDVTLEVENHLTALSNMNVISETPTADGKRKAVTFATSPKMSSYLVAFAVGELEYISAQTKSGVEMRVYTVPGKKEQGQYSLDLSVKCIDWYNEWFDIKYPLPKCDLIAIPDFSMGAMENWGLVTYREIALLVDPGVTSTRQKSRVALVVAHELAHLWFGNLVTMKWWTDLWLKEGFASFMEYMFVGANCPEFKIWLHFLNDELASGMGLDALRNSHPIEVEIDNPNELDEIYDSITYAKSNSVNRMLCYYLSEPVFQKGLRLYLKRFQYSNAVTQDLWTALSEASGQNVNELMSGWTQQMGFPVLKVSQRQDGNNRILTVEQRRFISDGGEDPKNSQWQVPITVAVGSSPSDVKARFLLKEKQQEFTIEGVAPGEWVKLNSGTTGFYRVEYSDEMLTAMLPDIASRRMPVLDRFGLINDLSALLNTGRVSIAQFVQVAASSAKEDEYVVWGAIDEGMSKLLACAREMSEDTLKSAKQLVVKMFEQTGAELGFAEQAGEDSQKMMLRSLVQARLARAGHQPTIDKFTQMFNDFLEKGTPIHPDIRLATFGVVARYGGKEGFDKLMNLRETTTFQEIERQTMVAMSQTPEESLLAQLFEYGFEKNKVRPQDQLYLFLGTGATHMGQQYAWKYFCEHIKEFLDKYGGANSSLFQRCLKFAGESFGNEKRAVEFQDFFCNCNVLSDTDRQTLARPIGQTVEAIRLNARLLESNRQIIENLLKQSNV</sequence>
<gene>
    <name evidence="10 15" type="primary">pam-1</name>
    <name evidence="15" type="ORF">F49E8.3</name>
</gene>
<proteinExistence type="evidence at protein level"/>
<comment type="function">
    <text evidence="5 6 7 8 9">Aminopeptidase (PubMed:12930831). Required for the exit from meiosis, probably upstream of cyclin cyb-3 (PubMed:17021038). Involved in the establishment of the anterior-posterior polarity at the embryonic 1-cell stage by regulating the dynamics of sperm-donated centrosomes (PubMed:17021038, PubMed:20599902, PubMed:28065742). Plays a role in oocyte maturation (PubMed:24663498). Required for embryonic development (PubMed:12930831).</text>
</comment>
<comment type="catalytic activity">
    <reaction evidence="12">
        <text>Release of an N-terminal amino acid, preferentially alanine, from a wide range of peptides, amides and arylamides.</text>
        <dbReference type="EC" id="3.4.11.14"/>
    </reaction>
</comment>
<comment type="cofactor">
    <cofactor evidence="4 5">
        <name>Zn(2+)</name>
        <dbReference type="ChEBI" id="CHEBI:29105"/>
    </cofactor>
    <text evidence="4 5">Binds 1 zinc ion per subunit. Can also use Ni(2+) and Co(2+) (PubMed:12930831).</text>
</comment>
<comment type="activity regulation">
    <text evidence="5">Inhibited by chelating agent 1,10-phenanthroline, aminopeptidase inhibitors actinonin, amastatin, and leuhistin, and to a lesser extent by puromycin.</text>
</comment>
<comment type="biophysicochemical properties">
    <kinetics>
        <KM evidence="5">34 uM for L-Arg-AMC</KM>
        <KM evidence="5">59 uM for L-Met-AMC</KM>
        <KM evidence="5">63 uM for L-Leu-AMC</KM>
        <KM evidence="5">73 uM for L-Tyr-AMC</KM>
        <KM evidence="5">78 uM for L-Lys-AMC</KM>
        <KM evidence="5">97 uM for L-Ala-AMC</KM>
        <KM evidence="5">160 uM for L-Phe-AMC</KM>
        <KM evidence="5">390 uM for L-Gly-AMC</KM>
        <KM evidence="5">840 uM for L-Ser-AMC</KM>
    </kinetics>
</comment>
<comment type="subcellular location">
    <subcellularLocation>
        <location evidence="7">Cytoplasm</location>
    </subcellularLocation>
    <subcellularLocation>
        <location evidence="7">Cytoplasm</location>
        <location evidence="7">Cell cortex</location>
    </subcellularLocation>
    <subcellularLocation>
        <location evidence="7">Chromosome</location>
    </subcellularLocation>
    <subcellularLocation>
        <location evidence="7">Cytoplasm</location>
        <location evidence="7">Cytoskeleton</location>
        <location evidence="7">Spindle pole</location>
    </subcellularLocation>
    <text evidence="7">During meiosis I, localizes to the cell cortex. During meiosis II, localizes to the cytoplasm. During embryonic mitosis, localizes around mitotic chromosomes at metaphase and anaphase and near the spindle poles. In spermatids, excluded from the chromosomes.</text>
</comment>
<comment type="alternative products">
    <event type="alternative splicing"/>
    <isoform>
        <id>Q4TT88-1</id>
        <name evidence="15">b</name>
        <sequence type="displayed"/>
    </isoform>
    <isoform>
        <id>Q4TT88-2</id>
        <name evidence="14">a</name>
        <sequence type="described" ref="VSP_059000"/>
    </isoform>
</comment>
<comment type="tissue specificity">
    <text evidence="5 7">Expressed mainly in intestinal cells in the posterior part of the intestine and in amphid sensory neurons and nerve ring neurons (PubMed:12930831). Expressed in neurons in the male tail (PubMed:12930831). Expressed in mature spermatids (at protein level) (PubMed:20599902).</text>
</comment>
<comment type="developmental stage">
    <text evidence="5 7">Expressed in the 1-cell embryos (at protein level) (PubMed:20599902). Expressed during gastrulation and throughout the larval stage and in adults (PubMed:12930831).</text>
</comment>
<comment type="disruption phenotype">
    <text evidence="5 6 7 8 9">RNAi-mediated knockdown causes an arrest at the gastrulation stage in 30 percent of embryos (PubMed:12930831). The surviving adults lay a substantial number of unfertilized oocytes (PubMed:12930831). However, brood size is only slightly reduced (PubMed:24663498). In the gonads, the pachytene zone is expanded in 15 percent of animals and oocyte nucleolus disassembly is delayed (PubMed:24663498). Mutant 1-cell embryos have a delay in meiotic exit during which chromosomes fail to decondense after polar body extrusion and oocyte and sperm pronuclear envelope formation is delayed (PubMed:17021038). In addition, 33 percent of 1-cell embryos have impaired chromosome segregation at meiotic anaphase II (PubMed:17021038). During meiotic exit delay, sperm pronucleus/centrosome complex (SPCC) dissociates prematurely from the posterior cortex resulting in a failure to establish anterior-posterior polarity subsequently leading to a symmetric division in half of the 1-cell embryos (PubMed:17021038, PubMed:20599902, PubMed:28065742). Premature microtubule nucleation prior to the sperm pronuclear appearance occurs (PubMed:17021038, PubMed:20599902). Cortical flows, pseudocleavage and asymmetric localization of par-1, par-2, par-3 and par-6 are absent, and cytoplasmic P granules and pie-1 are mislocalized prior to the first mitotic division (PubMed:17021038, PubMed:20599902, PubMed:28065742). In addition, non-muscle myosin nmy-2 foci fails to clear from the posterior part during polarization in half of the 1-cell embryos (PubMed:28065742). Simultaneous RNAi-mediated knockdown of cyclin cyb-3, causes a failure to extrude the second polar body and prevents anaphase entry in some of the 1-cel embryos (PubMed:17021038). Also restores normal timing for meiotic exit but not the establishment of AP axis polarity (PubMed:17021038). Simultaneous RNAi-mediated knockdown of dynein heavy chain dhc-1, restores anterior-posterior polarity, par-1, par2 and par-6 asymmetric localization and pseudocleavage formation (PubMed:20599902).</text>
</comment>
<comment type="similarity">
    <text evidence="4">Belongs to the peptidase M1 family.</text>
</comment>
<evidence type="ECO:0000250" key="1">
    <source>
        <dbReference type="UniProtKB" id="P15144"/>
    </source>
</evidence>
<evidence type="ECO:0000250" key="2">
    <source>
        <dbReference type="UniProtKB" id="Q6P179"/>
    </source>
</evidence>
<evidence type="ECO:0000255" key="3">
    <source>
        <dbReference type="PROSITE-ProRule" id="PRU10095"/>
    </source>
</evidence>
<evidence type="ECO:0000255" key="4">
    <source>
        <dbReference type="RuleBase" id="RU364040"/>
    </source>
</evidence>
<evidence type="ECO:0000269" key="5">
    <source>
    </source>
</evidence>
<evidence type="ECO:0000269" key="6">
    <source>
    </source>
</evidence>
<evidence type="ECO:0000269" key="7">
    <source>
    </source>
</evidence>
<evidence type="ECO:0000269" key="8">
    <source>
    </source>
</evidence>
<evidence type="ECO:0000269" key="9">
    <source>
    </source>
</evidence>
<evidence type="ECO:0000303" key="10">
    <source>
    </source>
</evidence>
<evidence type="ECO:0000305" key="11"/>
<evidence type="ECO:0000305" key="12">
    <source>
    </source>
</evidence>
<evidence type="ECO:0000312" key="13">
    <source>
        <dbReference type="Proteomes" id="UP000001940"/>
    </source>
</evidence>
<evidence type="ECO:0000312" key="14">
    <source>
        <dbReference type="WormBase" id="F49E8.3a"/>
    </source>
</evidence>
<evidence type="ECO:0000312" key="15">
    <source>
        <dbReference type="WormBase" id="F49E8.3b"/>
    </source>
</evidence>